<evidence type="ECO:0000250" key="1">
    <source>
        <dbReference type="UniProtKB" id="I6YBX3"/>
    </source>
</evidence>
<evidence type="ECO:0000255" key="2"/>
<evidence type="ECO:0000269" key="3">
    <source>
    </source>
</evidence>
<evidence type="ECO:0000303" key="4">
    <source>
    </source>
</evidence>
<evidence type="ECO:0000305" key="5"/>
<evidence type="ECO:0007829" key="6">
    <source>
        <dbReference type="PDB" id="6ZT4"/>
    </source>
</evidence>
<evidence type="ECO:0007829" key="7">
    <source>
        <dbReference type="PDB" id="6ZT5"/>
    </source>
</evidence>
<proteinExistence type="evidence at protein level"/>
<sequence>MRIGANGDETVWADEEFAGRDFRDEDLSRIRTERVVFTECDFSGVDLSESEHHGSAFRNCTFRRSTIWHSTFTNCSLLGSVFTECRIRPVTFVECDFTLAVLGGCDLRAVDLSDCRLREVSLVGADLRKAVLRRADLTGSRVQDARLEEADLRGTRVDPTFWTTAKVRGAKIDIEQALAYAAAHGLAVHGG</sequence>
<protein>
    <recommendedName>
        <fullName evidence="4 5">Pentapeptide repeat protein MfpA</fullName>
    </recommendedName>
    <alternativeName>
        <fullName evidence="4">Mycobacterial fluoroquinone resistance pentapeptide</fullName>
    </alternativeName>
    <alternativeName>
        <fullName evidence="4">Orf3</fullName>
    </alternativeName>
</protein>
<keyword id="KW-0002">3D-structure</keyword>
<keyword id="KW-0046">Antibiotic resistance</keyword>
<keyword id="KW-1185">Reference proteome</keyword>
<dbReference type="EMBL" id="CP000480">
    <property type="protein sequence ID" value="ABK73161.1"/>
    <property type="molecule type" value="Genomic_DNA"/>
</dbReference>
<dbReference type="EMBL" id="CP001663">
    <property type="protein sequence ID" value="AFP38075.1"/>
    <property type="molecule type" value="Genomic_DNA"/>
</dbReference>
<dbReference type="RefSeq" id="WP_003893048.1">
    <property type="nucleotide sequence ID" value="NZ_SIJM01000023.1"/>
</dbReference>
<dbReference type="RefSeq" id="YP_886018.1">
    <property type="nucleotide sequence ID" value="NC_008596.1"/>
</dbReference>
<dbReference type="PDB" id="6ZT4">
    <property type="method" value="X-ray"/>
    <property type="resolution" value="1.77 A"/>
    <property type="chains" value="A/B=1-191"/>
</dbReference>
<dbReference type="PDB" id="6ZT5">
    <property type="method" value="X-ray"/>
    <property type="resolution" value="2.20 A"/>
    <property type="chains" value="A/B=1-191"/>
</dbReference>
<dbReference type="PDBsum" id="6ZT4"/>
<dbReference type="PDBsum" id="6ZT5"/>
<dbReference type="SMR" id="A0QSY0"/>
<dbReference type="STRING" id="246196.MSMEG_1641"/>
<dbReference type="PaxDb" id="246196-MSMEI_1602"/>
<dbReference type="KEGG" id="msb:LJ00_08195"/>
<dbReference type="KEGG" id="msg:MSMEI_1602"/>
<dbReference type="KEGG" id="msm:MSMEG_1641"/>
<dbReference type="PATRIC" id="fig|246196.19.peg.1626"/>
<dbReference type="eggNOG" id="COG1357">
    <property type="taxonomic scope" value="Bacteria"/>
</dbReference>
<dbReference type="OrthoDB" id="2579959at2"/>
<dbReference type="Proteomes" id="UP000000757">
    <property type="component" value="Chromosome"/>
</dbReference>
<dbReference type="Proteomes" id="UP000006158">
    <property type="component" value="Chromosome"/>
</dbReference>
<dbReference type="GO" id="GO:0046677">
    <property type="term" value="P:response to antibiotic"/>
    <property type="evidence" value="ECO:0007669"/>
    <property type="project" value="UniProtKB-KW"/>
</dbReference>
<dbReference type="Gene3D" id="2.160.20.80">
    <property type="entry name" value="E3 ubiquitin-protein ligase SopA"/>
    <property type="match status" value="1"/>
</dbReference>
<dbReference type="InterPro" id="IPR001646">
    <property type="entry name" value="5peptide_repeat"/>
</dbReference>
<dbReference type="InterPro" id="IPR051082">
    <property type="entry name" value="Pentapeptide-BTB/POZ_domain"/>
</dbReference>
<dbReference type="PANTHER" id="PTHR14136">
    <property type="entry name" value="BTB_POZ DOMAIN-CONTAINING PROTEIN KCTD9"/>
    <property type="match status" value="1"/>
</dbReference>
<dbReference type="PANTHER" id="PTHR14136:SF17">
    <property type="entry name" value="BTB_POZ DOMAIN-CONTAINING PROTEIN KCTD9"/>
    <property type="match status" value="1"/>
</dbReference>
<dbReference type="Pfam" id="PF13599">
    <property type="entry name" value="Pentapeptide_4"/>
    <property type="match status" value="1"/>
</dbReference>
<dbReference type="SUPFAM" id="SSF141571">
    <property type="entry name" value="Pentapeptide repeat-like"/>
    <property type="match status" value="1"/>
</dbReference>
<organism>
    <name type="scientific">Mycolicibacterium smegmatis (strain ATCC 700084 / mc(2)155)</name>
    <name type="common">Mycobacterium smegmatis</name>
    <dbReference type="NCBI Taxonomy" id="246196"/>
    <lineage>
        <taxon>Bacteria</taxon>
        <taxon>Bacillati</taxon>
        <taxon>Actinomycetota</taxon>
        <taxon>Actinomycetes</taxon>
        <taxon>Mycobacteriales</taxon>
        <taxon>Mycobacteriaceae</taxon>
        <taxon>Mycolicibacterium</taxon>
    </lineage>
</organism>
<gene>
    <name evidence="4" type="primary">mfpA</name>
    <name type="ordered locus">MSMEG_1641</name>
    <name type="ordered locus">MSMEI_1602</name>
</gene>
<accession>A0QSY0</accession>
<name>MFPA_MYCS2</name>
<reference key="1">
    <citation type="submission" date="2006-10" db="EMBL/GenBank/DDBJ databases">
        <authorList>
            <person name="Fleischmann R.D."/>
            <person name="Dodson R.J."/>
            <person name="Haft D.H."/>
            <person name="Merkel J.S."/>
            <person name="Nelson W.C."/>
            <person name="Fraser C.M."/>
        </authorList>
    </citation>
    <scope>NUCLEOTIDE SEQUENCE [LARGE SCALE GENOMIC DNA]</scope>
    <source>
        <strain>ATCC 700084 / mc(2)155</strain>
    </source>
</reference>
<reference key="2">
    <citation type="journal article" date="2007" name="Genome Biol.">
        <title>Interrupted coding sequences in Mycobacterium smegmatis: authentic mutations or sequencing errors?</title>
        <authorList>
            <person name="Deshayes C."/>
            <person name="Perrodou E."/>
            <person name="Gallien S."/>
            <person name="Euphrasie D."/>
            <person name="Schaeffer C."/>
            <person name="Van-Dorsselaer A."/>
            <person name="Poch O."/>
            <person name="Lecompte O."/>
            <person name="Reyrat J.-M."/>
        </authorList>
    </citation>
    <scope>NUCLEOTIDE SEQUENCE [LARGE SCALE GENOMIC DNA]</scope>
    <source>
        <strain>ATCC 700084 / mc(2)155</strain>
    </source>
</reference>
<reference key="3">
    <citation type="journal article" date="2009" name="Genome Res.">
        <title>Ortho-proteogenomics: multiple proteomes investigation through orthology and a new MS-based protocol.</title>
        <authorList>
            <person name="Gallien S."/>
            <person name="Perrodou E."/>
            <person name="Carapito C."/>
            <person name="Deshayes C."/>
            <person name="Reyrat J.-M."/>
            <person name="Van Dorsselaer A."/>
            <person name="Poch O."/>
            <person name="Schaeffer C."/>
            <person name="Lecompte O."/>
        </authorList>
    </citation>
    <scope>NUCLEOTIDE SEQUENCE [LARGE SCALE GENOMIC DNA]</scope>
    <source>
        <strain>ATCC 700084 / mc(2)155</strain>
    </source>
</reference>
<reference key="4">
    <citation type="journal article" date="2001" name="Antimicrob. Agents Chemother.">
        <title>Intrinsic resistance of Mycobacterium smegmatis to fluoroquinolones may be influenced by new pentapeptide protein MfpA.</title>
        <authorList>
            <person name="Montero C."/>
            <person name="Mateu G."/>
            <person name="Rodriguez R."/>
            <person name="Takiff H."/>
        </authorList>
    </citation>
    <scope>FUNCTION</scope>
    <scope>DISRUPTION PHENOTYPE</scope>
    <scope>ANTIBIOTIC RESISTANCE</scope>
    <source>
        <strain>ATCC 700084 / mc(2)155</strain>
    </source>
</reference>
<comment type="function">
    <text evidence="1 3">When present on multicopy plasmids confers increased resistance to fluoroquinolone antibiotics such as ciprofloxacin and sparfloxacin but not the quinolone nalidixic acid (PubMed:11709313). Forms a structure that exhibits size, shape and electrostatic similarity to B-form DNA; it may bind to DNA gyrase which is postulated to protect it from fluoroquinolones (By similarity).</text>
</comment>
<comment type="subunit">
    <text evidence="1">Homodimer. Probably interacts with DNA gyrase.</text>
</comment>
<comment type="domain">
    <text evidence="1">Each subunit forms a right-handed beta-helix with 8 complete coils that stack upon each other.</text>
</comment>
<comment type="disruption phenotype">
    <text evidence="3">Decreased resistance to fluoroquinolone antibiotics ciprofloxacin and sparfloxacin.</text>
</comment>
<comment type="similarity">
    <text evidence="5">Belongs to the pentapeptide repeat protein family.</text>
</comment>
<feature type="chain" id="PRO_0000434154" description="Pentapeptide repeat protein MfpA">
    <location>
        <begin position="1"/>
        <end position="191"/>
    </location>
</feature>
<feature type="domain" description="Pentapeptide repeat" evidence="2">
    <location>
        <begin position="115"/>
        <end position="154"/>
    </location>
</feature>
<feature type="strand" evidence="6">
    <location>
        <begin position="11"/>
        <end position="14"/>
    </location>
</feature>
<feature type="strand" evidence="6">
    <location>
        <begin position="16"/>
        <end position="19"/>
    </location>
</feature>
<feature type="strand" evidence="6">
    <location>
        <begin position="31"/>
        <end position="34"/>
    </location>
</feature>
<feature type="strand" evidence="6">
    <location>
        <begin position="36"/>
        <end position="39"/>
    </location>
</feature>
<feature type="strand" evidence="6">
    <location>
        <begin position="51"/>
        <end position="54"/>
    </location>
</feature>
<feature type="strand" evidence="6">
    <location>
        <begin position="56"/>
        <end position="59"/>
    </location>
</feature>
<feature type="strand" evidence="6">
    <location>
        <begin position="71"/>
        <end position="74"/>
    </location>
</feature>
<feature type="strand" evidence="6">
    <location>
        <begin position="91"/>
        <end position="94"/>
    </location>
</feature>
<feature type="helix" evidence="6">
    <location>
        <begin position="161"/>
        <end position="164"/>
    </location>
</feature>
<feature type="helix" evidence="6">
    <location>
        <begin position="174"/>
        <end position="183"/>
    </location>
</feature>
<feature type="strand" evidence="7">
    <location>
        <begin position="187"/>
        <end position="189"/>
    </location>
</feature>